<feature type="chain" id="PRO_0000319169" description="Formate-dependent phosphoribosylglycinamide formyltransferase">
    <location>
        <begin position="1"/>
        <end position="386"/>
    </location>
</feature>
<feature type="domain" description="ATP-grasp" evidence="1">
    <location>
        <begin position="112"/>
        <end position="301"/>
    </location>
</feature>
<feature type="binding site" evidence="1">
    <location>
        <begin position="15"/>
        <end position="16"/>
    </location>
    <ligand>
        <name>N(1)-(5-phospho-beta-D-ribosyl)glycinamide</name>
        <dbReference type="ChEBI" id="CHEBI:143788"/>
    </ligand>
</feature>
<feature type="binding site" evidence="1">
    <location>
        <position position="75"/>
    </location>
    <ligand>
        <name>N(1)-(5-phospho-beta-D-ribosyl)glycinamide</name>
        <dbReference type="ChEBI" id="CHEBI:143788"/>
    </ligand>
</feature>
<feature type="binding site" evidence="1">
    <location>
        <position position="107"/>
    </location>
    <ligand>
        <name>ATP</name>
        <dbReference type="ChEBI" id="CHEBI:30616"/>
    </ligand>
</feature>
<feature type="binding site" evidence="1">
    <location>
        <position position="148"/>
    </location>
    <ligand>
        <name>ATP</name>
        <dbReference type="ChEBI" id="CHEBI:30616"/>
    </ligand>
</feature>
<feature type="binding site" evidence="1">
    <location>
        <begin position="153"/>
        <end position="158"/>
    </location>
    <ligand>
        <name>ATP</name>
        <dbReference type="ChEBI" id="CHEBI:30616"/>
    </ligand>
</feature>
<feature type="binding site" evidence="1">
    <location>
        <begin position="188"/>
        <end position="191"/>
    </location>
    <ligand>
        <name>ATP</name>
        <dbReference type="ChEBI" id="CHEBI:30616"/>
    </ligand>
</feature>
<feature type="binding site" evidence="1">
    <location>
        <position position="196"/>
    </location>
    <ligand>
        <name>ATP</name>
        <dbReference type="ChEBI" id="CHEBI:30616"/>
    </ligand>
</feature>
<feature type="binding site" evidence="1">
    <location>
        <position position="260"/>
    </location>
    <ligand>
        <name>Mg(2+)</name>
        <dbReference type="ChEBI" id="CHEBI:18420"/>
    </ligand>
</feature>
<feature type="binding site" evidence="1">
    <location>
        <position position="272"/>
    </location>
    <ligand>
        <name>Mg(2+)</name>
        <dbReference type="ChEBI" id="CHEBI:18420"/>
    </ligand>
</feature>
<feature type="binding site" evidence="1">
    <location>
        <position position="279"/>
    </location>
    <ligand>
        <name>N(1)-(5-phospho-beta-D-ribosyl)glycinamide</name>
        <dbReference type="ChEBI" id="CHEBI:143788"/>
    </ligand>
</feature>
<feature type="binding site" evidence="1">
    <location>
        <position position="349"/>
    </location>
    <ligand>
        <name>N(1)-(5-phospho-beta-D-ribosyl)glycinamide</name>
        <dbReference type="ChEBI" id="CHEBI:143788"/>
    </ligand>
</feature>
<feature type="binding site" evidence="1">
    <location>
        <begin position="356"/>
        <end position="357"/>
    </location>
    <ligand>
        <name>N(1)-(5-phospho-beta-D-ribosyl)glycinamide</name>
        <dbReference type="ChEBI" id="CHEBI:143788"/>
    </ligand>
</feature>
<keyword id="KW-0067">ATP-binding</keyword>
<keyword id="KW-0436">Ligase</keyword>
<keyword id="KW-0460">Magnesium</keyword>
<keyword id="KW-0479">Metal-binding</keyword>
<keyword id="KW-0547">Nucleotide-binding</keyword>
<keyword id="KW-0658">Purine biosynthesis</keyword>
<comment type="function">
    <text evidence="1">Involved in the de novo purine biosynthesis. Catalyzes the transfer of formate to 5-phospho-ribosyl-glycinamide (GAR), producing 5-phospho-ribosyl-N-formylglycinamide (FGAR). Formate is provided by PurU via hydrolysis of 10-formyl-tetrahydrofolate.</text>
</comment>
<comment type="catalytic activity">
    <reaction evidence="1">
        <text>N(1)-(5-phospho-beta-D-ribosyl)glycinamide + formate + ATP = N(2)-formyl-N(1)-(5-phospho-beta-D-ribosyl)glycinamide + ADP + phosphate + H(+)</text>
        <dbReference type="Rhea" id="RHEA:24829"/>
        <dbReference type="ChEBI" id="CHEBI:15378"/>
        <dbReference type="ChEBI" id="CHEBI:15740"/>
        <dbReference type="ChEBI" id="CHEBI:30616"/>
        <dbReference type="ChEBI" id="CHEBI:43474"/>
        <dbReference type="ChEBI" id="CHEBI:143788"/>
        <dbReference type="ChEBI" id="CHEBI:147286"/>
        <dbReference type="ChEBI" id="CHEBI:456216"/>
        <dbReference type="EC" id="6.3.1.21"/>
    </reaction>
    <physiologicalReaction direction="left-to-right" evidence="1">
        <dbReference type="Rhea" id="RHEA:24830"/>
    </physiologicalReaction>
</comment>
<comment type="pathway">
    <text evidence="1">Purine metabolism; IMP biosynthesis via de novo pathway; N(2)-formyl-N(1)-(5-phospho-D-ribosyl)glycinamide from N(1)-(5-phospho-D-ribosyl)glycinamide (formate route): step 1/1.</text>
</comment>
<comment type="subunit">
    <text evidence="1">Homodimer.</text>
</comment>
<comment type="similarity">
    <text evidence="1">Belongs to the PurK/PurT family.</text>
</comment>
<gene>
    <name evidence="1" type="primary">purT</name>
    <name type="ordered locus">FTH_0087</name>
</gene>
<evidence type="ECO:0000255" key="1">
    <source>
        <dbReference type="HAMAP-Rule" id="MF_01643"/>
    </source>
</evidence>
<sequence>MNISNIKIMLLGSGELGKEFIIAAQRLGIHTIAVDRYKNAPAMQVAHESYVIDMLNSDALEQLILAKNPTYIVPEIEAINTDSLVKLEAHNFNIIPCAKATKLTMDRQGIRALAVQQLNLQTSKFAFANSEQEYLDVIQSIGLPFVIKPVMSSSGKGQSIVKEHNEIKKAWDYAQNGSRGHAKGVIVEQFIDFDYEITLLTVRHKDGTSFCDPIGHIQKDGDYRFSWQPHTMPDTALAKSQEIAKEITDALGGYGVFGVELFIKGDEVFFNEVSPRPHDTGMVTLISQNINEFELHLRAIVGLPIPDIQTLQPSASAAILLEGDTANASICGIDKALADANVDIRIFSKKEIHGKRRMGVVLAKAQNTHIALETSKQALAHIHLTK</sequence>
<dbReference type="EC" id="6.3.1.21" evidence="1"/>
<dbReference type="EMBL" id="CP000437">
    <property type="protein sequence ID" value="ABI82134.1"/>
    <property type="molecule type" value="Genomic_DNA"/>
</dbReference>
<dbReference type="RefSeq" id="WP_003014073.1">
    <property type="nucleotide sequence ID" value="NC_017463.1"/>
</dbReference>
<dbReference type="SMR" id="Q0BP50"/>
<dbReference type="KEGG" id="fth:FTH_0087"/>
<dbReference type="UniPathway" id="UPA00074">
    <property type="reaction ID" value="UER00127"/>
</dbReference>
<dbReference type="GO" id="GO:0005829">
    <property type="term" value="C:cytosol"/>
    <property type="evidence" value="ECO:0007669"/>
    <property type="project" value="TreeGrafter"/>
</dbReference>
<dbReference type="GO" id="GO:0005524">
    <property type="term" value="F:ATP binding"/>
    <property type="evidence" value="ECO:0007669"/>
    <property type="project" value="UniProtKB-UniRule"/>
</dbReference>
<dbReference type="GO" id="GO:0000287">
    <property type="term" value="F:magnesium ion binding"/>
    <property type="evidence" value="ECO:0007669"/>
    <property type="project" value="InterPro"/>
</dbReference>
<dbReference type="GO" id="GO:0043815">
    <property type="term" value="F:phosphoribosylglycinamide formyltransferase 2 activity"/>
    <property type="evidence" value="ECO:0007669"/>
    <property type="project" value="UniProtKB-UniRule"/>
</dbReference>
<dbReference type="GO" id="GO:0004644">
    <property type="term" value="F:phosphoribosylglycinamide formyltransferase activity"/>
    <property type="evidence" value="ECO:0007669"/>
    <property type="project" value="InterPro"/>
</dbReference>
<dbReference type="GO" id="GO:0006189">
    <property type="term" value="P:'de novo' IMP biosynthetic process"/>
    <property type="evidence" value="ECO:0007669"/>
    <property type="project" value="UniProtKB-UniRule"/>
</dbReference>
<dbReference type="Gene3D" id="3.40.50.20">
    <property type="match status" value="1"/>
</dbReference>
<dbReference type="Gene3D" id="3.30.1490.20">
    <property type="entry name" value="ATP-grasp fold, A domain"/>
    <property type="match status" value="1"/>
</dbReference>
<dbReference type="Gene3D" id="3.30.470.20">
    <property type="entry name" value="ATP-grasp fold, B domain"/>
    <property type="match status" value="1"/>
</dbReference>
<dbReference type="HAMAP" id="MF_01643">
    <property type="entry name" value="PurT"/>
    <property type="match status" value="1"/>
</dbReference>
<dbReference type="InterPro" id="IPR011761">
    <property type="entry name" value="ATP-grasp"/>
</dbReference>
<dbReference type="InterPro" id="IPR003135">
    <property type="entry name" value="ATP-grasp_carboxylate-amine"/>
</dbReference>
<dbReference type="InterPro" id="IPR013815">
    <property type="entry name" value="ATP_grasp_subdomain_1"/>
</dbReference>
<dbReference type="InterPro" id="IPR016185">
    <property type="entry name" value="PreATP-grasp_dom_sf"/>
</dbReference>
<dbReference type="InterPro" id="IPR005862">
    <property type="entry name" value="PurT"/>
</dbReference>
<dbReference type="InterPro" id="IPR054350">
    <property type="entry name" value="PurT/PurK_preATP-grasp"/>
</dbReference>
<dbReference type="InterPro" id="IPR048740">
    <property type="entry name" value="PurT_C"/>
</dbReference>
<dbReference type="InterPro" id="IPR011054">
    <property type="entry name" value="Rudment_hybrid_motif"/>
</dbReference>
<dbReference type="NCBIfam" id="NF006766">
    <property type="entry name" value="PRK09288.1"/>
    <property type="match status" value="1"/>
</dbReference>
<dbReference type="NCBIfam" id="TIGR01142">
    <property type="entry name" value="purT"/>
    <property type="match status" value="1"/>
</dbReference>
<dbReference type="PANTHER" id="PTHR43055">
    <property type="entry name" value="FORMATE-DEPENDENT PHOSPHORIBOSYLGLYCINAMIDE FORMYLTRANSFERASE"/>
    <property type="match status" value="1"/>
</dbReference>
<dbReference type="PANTHER" id="PTHR43055:SF1">
    <property type="entry name" value="FORMATE-DEPENDENT PHOSPHORIBOSYLGLYCINAMIDE FORMYLTRANSFERASE"/>
    <property type="match status" value="1"/>
</dbReference>
<dbReference type="Pfam" id="PF02222">
    <property type="entry name" value="ATP-grasp"/>
    <property type="match status" value="1"/>
</dbReference>
<dbReference type="Pfam" id="PF21244">
    <property type="entry name" value="PurT_C"/>
    <property type="match status" value="1"/>
</dbReference>
<dbReference type="Pfam" id="PF22660">
    <property type="entry name" value="RS_preATP-grasp-like"/>
    <property type="match status" value="1"/>
</dbReference>
<dbReference type="SUPFAM" id="SSF56059">
    <property type="entry name" value="Glutathione synthetase ATP-binding domain-like"/>
    <property type="match status" value="1"/>
</dbReference>
<dbReference type="SUPFAM" id="SSF52440">
    <property type="entry name" value="PreATP-grasp domain"/>
    <property type="match status" value="1"/>
</dbReference>
<dbReference type="SUPFAM" id="SSF51246">
    <property type="entry name" value="Rudiment single hybrid motif"/>
    <property type="match status" value="1"/>
</dbReference>
<dbReference type="PROSITE" id="PS50975">
    <property type="entry name" value="ATP_GRASP"/>
    <property type="match status" value="1"/>
</dbReference>
<organism>
    <name type="scientific">Francisella tularensis subsp. holarctica (strain OSU18)</name>
    <dbReference type="NCBI Taxonomy" id="393011"/>
    <lineage>
        <taxon>Bacteria</taxon>
        <taxon>Pseudomonadati</taxon>
        <taxon>Pseudomonadota</taxon>
        <taxon>Gammaproteobacteria</taxon>
        <taxon>Thiotrichales</taxon>
        <taxon>Francisellaceae</taxon>
        <taxon>Francisella</taxon>
    </lineage>
</organism>
<protein>
    <recommendedName>
        <fullName evidence="1">Formate-dependent phosphoribosylglycinamide formyltransferase</fullName>
        <ecNumber evidence="1">6.3.1.21</ecNumber>
    </recommendedName>
    <alternativeName>
        <fullName evidence="1">5'-phosphoribosylglycinamide transformylase 2</fullName>
    </alternativeName>
    <alternativeName>
        <fullName evidence="1">Formate-dependent GAR transformylase</fullName>
    </alternativeName>
    <alternativeName>
        <fullName evidence="1">GAR transformylase 2</fullName>
        <shortName evidence="1">GART 2</shortName>
    </alternativeName>
    <alternativeName>
        <fullName evidence="1">Non-folate glycinamide ribonucleotide transformylase</fullName>
    </alternativeName>
    <alternativeName>
        <fullName evidence="1">Phosphoribosylglycinamide formyltransferase 2</fullName>
    </alternativeName>
</protein>
<name>PURT_FRATO</name>
<proteinExistence type="inferred from homology"/>
<reference key="1">
    <citation type="journal article" date="2006" name="J. Bacteriol.">
        <title>Chromosome rearrangement and diversification of Francisella tularensis revealed by the type B (OSU18) genome sequence.</title>
        <authorList>
            <person name="Petrosino J.F."/>
            <person name="Xiang Q."/>
            <person name="Karpathy S.E."/>
            <person name="Jiang H."/>
            <person name="Yerrapragada S."/>
            <person name="Liu Y."/>
            <person name="Gioia J."/>
            <person name="Hemphill L."/>
            <person name="Gonzalez A."/>
            <person name="Raghavan T.M."/>
            <person name="Uzman A."/>
            <person name="Fox G.E."/>
            <person name="Highlander S."/>
            <person name="Reichard M."/>
            <person name="Morton R.J."/>
            <person name="Clinkenbeard K.D."/>
            <person name="Weinstock G.M."/>
        </authorList>
    </citation>
    <scope>NUCLEOTIDE SEQUENCE [LARGE SCALE GENOMIC DNA]</scope>
    <source>
        <strain>OSU18</strain>
    </source>
</reference>
<accession>Q0BP50</accession>